<comment type="function">
    <text evidence="1">Acts as a radical domain for damaged PFL and possibly other radical proteins.</text>
</comment>
<name>GRCA_SALSV</name>
<proteinExistence type="inferred from homology"/>
<reference key="1">
    <citation type="journal article" date="2011" name="J. Bacteriol.">
        <title>Comparative genomics of 28 Salmonella enterica isolates: evidence for CRISPR-mediated adaptive sublineage evolution.</title>
        <authorList>
            <person name="Fricke W.F."/>
            <person name="Mammel M.K."/>
            <person name="McDermott P.F."/>
            <person name="Tartera C."/>
            <person name="White D.G."/>
            <person name="Leclerc J.E."/>
            <person name="Ravel J."/>
            <person name="Cebula T.A."/>
        </authorList>
    </citation>
    <scope>NUCLEOTIDE SEQUENCE [LARGE SCALE GENOMIC DNA]</scope>
    <source>
        <strain>CVM19633</strain>
    </source>
</reference>
<evidence type="ECO:0000255" key="1">
    <source>
        <dbReference type="HAMAP-Rule" id="MF_00806"/>
    </source>
</evidence>
<organism>
    <name type="scientific">Salmonella schwarzengrund (strain CVM19633)</name>
    <dbReference type="NCBI Taxonomy" id="439843"/>
    <lineage>
        <taxon>Bacteria</taxon>
        <taxon>Pseudomonadati</taxon>
        <taxon>Pseudomonadota</taxon>
        <taxon>Gammaproteobacteria</taxon>
        <taxon>Enterobacterales</taxon>
        <taxon>Enterobacteriaceae</taxon>
        <taxon>Salmonella</taxon>
    </lineage>
</organism>
<sequence length="127" mass="14344">MITGIQITKAANDDLLNSFWLLDSEKGEARCIVAKSGFAEDEVVAVSKLGEIEYREIPMEVKPEVRVEGGQHLNVNVLRRETLEDAVKHPEKYPQLTIRVSGYAVRFNSLTPEQQRDVIARTFTESL</sequence>
<keyword id="KW-0556">Organic radical</keyword>
<accession>B4TS28</accession>
<gene>
    <name evidence="1" type="primary">grcA</name>
    <name type="ordered locus">SeSA_A2840</name>
</gene>
<dbReference type="EMBL" id="CP001127">
    <property type="protein sequence ID" value="ACF89099.1"/>
    <property type="molecule type" value="Genomic_DNA"/>
</dbReference>
<dbReference type="RefSeq" id="WP_000627811.1">
    <property type="nucleotide sequence ID" value="NC_011094.1"/>
</dbReference>
<dbReference type="SMR" id="B4TS28"/>
<dbReference type="GeneID" id="66757020"/>
<dbReference type="KEGG" id="sew:SeSA_A2840"/>
<dbReference type="HOGENOM" id="CLU_133780_0_0_6"/>
<dbReference type="Proteomes" id="UP000001865">
    <property type="component" value="Chromosome"/>
</dbReference>
<dbReference type="GO" id="GO:0005829">
    <property type="term" value="C:cytosol"/>
    <property type="evidence" value="ECO:0007669"/>
    <property type="project" value="TreeGrafter"/>
</dbReference>
<dbReference type="GO" id="GO:0008861">
    <property type="term" value="F:formate C-acetyltransferase activity"/>
    <property type="evidence" value="ECO:0007669"/>
    <property type="project" value="TreeGrafter"/>
</dbReference>
<dbReference type="FunFam" id="3.20.70.20:FF:000002">
    <property type="entry name" value="Autonomous glycyl radical cofactor"/>
    <property type="match status" value="1"/>
</dbReference>
<dbReference type="Gene3D" id="3.20.70.20">
    <property type="match status" value="1"/>
</dbReference>
<dbReference type="HAMAP" id="MF_00806">
    <property type="entry name" value="GrcA"/>
    <property type="match status" value="1"/>
</dbReference>
<dbReference type="InterPro" id="IPR050244">
    <property type="entry name" value="Auton_GlycylRad_Cofactor"/>
</dbReference>
<dbReference type="InterPro" id="IPR019777">
    <property type="entry name" value="Form_AcTrfase_GR_CS"/>
</dbReference>
<dbReference type="InterPro" id="IPR001150">
    <property type="entry name" value="Gly_radical"/>
</dbReference>
<dbReference type="InterPro" id="IPR011140">
    <property type="entry name" value="Glycyl_radical_cofactor_GrcA"/>
</dbReference>
<dbReference type="NCBIfam" id="TIGR04365">
    <property type="entry name" value="spare_glycyl"/>
    <property type="match status" value="1"/>
</dbReference>
<dbReference type="PANTHER" id="PTHR30191">
    <property type="entry name" value="FORMATE ACETYLTRANSFERASE"/>
    <property type="match status" value="1"/>
</dbReference>
<dbReference type="PANTHER" id="PTHR30191:SF0">
    <property type="entry name" value="FORMATE ACETYLTRANSFERASE 1"/>
    <property type="match status" value="1"/>
</dbReference>
<dbReference type="Pfam" id="PF01228">
    <property type="entry name" value="Gly_radical"/>
    <property type="match status" value="1"/>
</dbReference>
<dbReference type="PIRSF" id="PIRSF000378">
    <property type="entry name" value="Gly_radicl_yfiD"/>
    <property type="match status" value="1"/>
</dbReference>
<dbReference type="SUPFAM" id="SSF51998">
    <property type="entry name" value="PFL-like glycyl radical enzymes"/>
    <property type="match status" value="1"/>
</dbReference>
<dbReference type="PROSITE" id="PS00850">
    <property type="entry name" value="GLY_RADICAL_1"/>
    <property type="match status" value="1"/>
</dbReference>
<dbReference type="PROSITE" id="PS51149">
    <property type="entry name" value="GLY_RADICAL_2"/>
    <property type="match status" value="1"/>
</dbReference>
<feature type="chain" id="PRO_1000134000" description="Autonomous glycyl radical cofactor">
    <location>
        <begin position="1"/>
        <end position="127"/>
    </location>
</feature>
<feature type="domain" description="Glycine radical" evidence="1">
    <location>
        <begin position="5"/>
        <end position="127"/>
    </location>
</feature>
<feature type="modified residue" description="Glycine radical" evidence="1">
    <location>
        <position position="102"/>
    </location>
</feature>
<protein>
    <recommendedName>
        <fullName evidence="1">Autonomous glycyl radical cofactor</fullName>
    </recommendedName>
</protein>